<comment type="function">
    <text evidence="1">Part of the Sec protein translocase complex. Interacts with the SecYEG preprotein conducting channel. Has a central role in coupling the hydrolysis of ATP to the transfer of proteins into and across the cell membrane, serving as an ATP-driven molecular motor driving the stepwise translocation of polypeptide chains across the membrane.</text>
</comment>
<comment type="catalytic activity">
    <reaction evidence="1">
        <text>ATP + H2O + cellular proteinSide 1 = ADP + phosphate + cellular proteinSide 2.</text>
        <dbReference type="EC" id="7.4.2.8"/>
    </reaction>
</comment>
<comment type="subunit">
    <text evidence="1">Monomer and homodimer. Part of the essential Sec protein translocation apparatus which comprises SecA, SecYEG and auxiliary proteins SecDF. Other proteins may also be involved.</text>
</comment>
<comment type="subcellular location">
    <subcellularLocation>
        <location evidence="1">Cell membrane</location>
        <topology evidence="1">Peripheral membrane protein</topology>
        <orientation evidence="1">Cytoplasmic side</orientation>
    </subcellularLocation>
    <subcellularLocation>
        <location evidence="1">Cytoplasm</location>
    </subcellularLocation>
    <text evidence="1">Distribution is 50-50.</text>
</comment>
<comment type="similarity">
    <text evidence="1">Belongs to the SecA family.</text>
</comment>
<evidence type="ECO:0000255" key="1">
    <source>
        <dbReference type="HAMAP-Rule" id="MF_01382"/>
    </source>
</evidence>
<sequence length="869" mass="97812">MFRVLNKVFDTNQRDVQRIVKTVVQPVNALEEETMKIENLAEAFMRLRQRVQEGGESLDDVLVPAFALIREAGRRAIGKRHYDVQLIGGTALHQGRIAEMRTGEGKTLVATLALALNALEGKGAHLVTVNDYLARVGAEEMGLLYRTLGLSVGLITRDMQPHQRQAAYACDITYVTNSELGFDYLRDNMAQSREQLVLRADNPLHYAIVDEVDSILIDEARTPLIISGAAEKATDLYYVYAKLVKRLQRGEPAEPGKRTEPTGDYTIDEKGKQVHLTEQGIAKIERLLSLGDLYSPENMDKAHMITQAIRARELYHREKDYIVNAEGEVVIIDEFTGRSMPGRRYGEGLHQAIEAKEGVKIENENQTLATITYQNFFRLYDKFAGMTGTAKTEEKEFLDIYGSDVLVIPTNKPVIRQDADDLVYRTRMGKYQAVVEEVKQMHATGRPILIGTASIDTSEQLSALLKQAGIRHSVLNAKYEAQEASIIAQAGRSGTVTIATNMAGRGTDIMLGGNAEFILGEAIEQNFGISRFTPEAEAFIKAIGREDPEAVTLGLRIPGMTEQFIRQAQQLQKDIIADRERVRELGGLHIIGTERHESRRIDNQLRGRAGRQGDPGSSRFYVSFEDDLMRLFASDRVVAMMDRLGMDDTQPIEAKMVTGAIERAQARVEDRNFGIRKQLLEFDNVMSKQRDIIYAQRREVLLGTDEDVEESTEGMIADFTEMQLAFYAPIDQPAESWDLETLRTNMLEAVPQLEHYDFEALRHMAPEAAHAHLLEAVADAFDARKAELGPTMLNSLARYVLLQVVDQHWKEHLHGMDVLRQGIGLRGYGQRDPFTEYKFEATNMFNDMIDNLKADVTKFIFRMQFGQAS</sequence>
<dbReference type="EC" id="7.4.2.8" evidence="1"/>
<dbReference type="EMBL" id="CP000359">
    <property type="protein sequence ID" value="ABF45357.1"/>
    <property type="molecule type" value="Genomic_DNA"/>
</dbReference>
<dbReference type="RefSeq" id="WP_011530194.1">
    <property type="nucleotide sequence ID" value="NC_008025.1"/>
</dbReference>
<dbReference type="SMR" id="Q1IZH7"/>
<dbReference type="STRING" id="319795.Dgeo_1058"/>
<dbReference type="KEGG" id="dge:Dgeo_1058"/>
<dbReference type="eggNOG" id="COG0653">
    <property type="taxonomic scope" value="Bacteria"/>
</dbReference>
<dbReference type="HOGENOM" id="CLU_005314_3_2_0"/>
<dbReference type="Proteomes" id="UP000002431">
    <property type="component" value="Chromosome"/>
</dbReference>
<dbReference type="GO" id="GO:0031522">
    <property type="term" value="C:cell envelope Sec protein transport complex"/>
    <property type="evidence" value="ECO:0007669"/>
    <property type="project" value="TreeGrafter"/>
</dbReference>
<dbReference type="GO" id="GO:0005829">
    <property type="term" value="C:cytosol"/>
    <property type="evidence" value="ECO:0007669"/>
    <property type="project" value="TreeGrafter"/>
</dbReference>
<dbReference type="GO" id="GO:0005886">
    <property type="term" value="C:plasma membrane"/>
    <property type="evidence" value="ECO:0007669"/>
    <property type="project" value="UniProtKB-SubCell"/>
</dbReference>
<dbReference type="GO" id="GO:0005524">
    <property type="term" value="F:ATP binding"/>
    <property type="evidence" value="ECO:0007669"/>
    <property type="project" value="UniProtKB-UniRule"/>
</dbReference>
<dbReference type="GO" id="GO:0008564">
    <property type="term" value="F:protein-exporting ATPase activity"/>
    <property type="evidence" value="ECO:0007669"/>
    <property type="project" value="UniProtKB-EC"/>
</dbReference>
<dbReference type="GO" id="GO:0065002">
    <property type="term" value="P:intracellular protein transmembrane transport"/>
    <property type="evidence" value="ECO:0007669"/>
    <property type="project" value="UniProtKB-UniRule"/>
</dbReference>
<dbReference type="GO" id="GO:0017038">
    <property type="term" value="P:protein import"/>
    <property type="evidence" value="ECO:0007669"/>
    <property type="project" value="InterPro"/>
</dbReference>
<dbReference type="GO" id="GO:0006605">
    <property type="term" value="P:protein targeting"/>
    <property type="evidence" value="ECO:0007669"/>
    <property type="project" value="UniProtKB-UniRule"/>
</dbReference>
<dbReference type="GO" id="GO:0043952">
    <property type="term" value="P:protein transport by the Sec complex"/>
    <property type="evidence" value="ECO:0007669"/>
    <property type="project" value="TreeGrafter"/>
</dbReference>
<dbReference type="CDD" id="cd17928">
    <property type="entry name" value="DEXDc_SecA"/>
    <property type="match status" value="1"/>
</dbReference>
<dbReference type="CDD" id="cd18803">
    <property type="entry name" value="SF2_C_secA"/>
    <property type="match status" value="1"/>
</dbReference>
<dbReference type="FunFam" id="1.10.3060.10:FF:000003">
    <property type="entry name" value="Protein translocase subunit SecA"/>
    <property type="match status" value="1"/>
</dbReference>
<dbReference type="FunFam" id="3.90.1440.10:FF:000002">
    <property type="entry name" value="Protein translocase subunit SecA"/>
    <property type="match status" value="1"/>
</dbReference>
<dbReference type="Gene3D" id="1.10.3060.10">
    <property type="entry name" value="Helical scaffold and wing domains of SecA"/>
    <property type="match status" value="1"/>
</dbReference>
<dbReference type="Gene3D" id="3.40.50.300">
    <property type="entry name" value="P-loop containing nucleotide triphosphate hydrolases"/>
    <property type="match status" value="2"/>
</dbReference>
<dbReference type="Gene3D" id="3.90.1440.10">
    <property type="entry name" value="SecA, preprotein cross-linking domain"/>
    <property type="match status" value="1"/>
</dbReference>
<dbReference type="HAMAP" id="MF_01382">
    <property type="entry name" value="SecA"/>
    <property type="match status" value="1"/>
</dbReference>
<dbReference type="InterPro" id="IPR014001">
    <property type="entry name" value="Helicase_ATP-bd"/>
</dbReference>
<dbReference type="InterPro" id="IPR001650">
    <property type="entry name" value="Helicase_C-like"/>
</dbReference>
<dbReference type="InterPro" id="IPR027417">
    <property type="entry name" value="P-loop_NTPase"/>
</dbReference>
<dbReference type="InterPro" id="IPR000185">
    <property type="entry name" value="SecA"/>
</dbReference>
<dbReference type="InterPro" id="IPR020937">
    <property type="entry name" value="SecA_CS"/>
</dbReference>
<dbReference type="InterPro" id="IPR011115">
    <property type="entry name" value="SecA_DEAD"/>
</dbReference>
<dbReference type="InterPro" id="IPR014018">
    <property type="entry name" value="SecA_motor_DEAD"/>
</dbReference>
<dbReference type="InterPro" id="IPR011130">
    <property type="entry name" value="SecA_preprotein_X-link_dom"/>
</dbReference>
<dbReference type="InterPro" id="IPR044722">
    <property type="entry name" value="SecA_SF2_C"/>
</dbReference>
<dbReference type="InterPro" id="IPR011116">
    <property type="entry name" value="SecA_Wing/Scaffold"/>
</dbReference>
<dbReference type="InterPro" id="IPR036266">
    <property type="entry name" value="SecA_Wing/Scaffold_sf"/>
</dbReference>
<dbReference type="InterPro" id="IPR036670">
    <property type="entry name" value="SecA_X-link_sf"/>
</dbReference>
<dbReference type="NCBIfam" id="NF009538">
    <property type="entry name" value="PRK12904.1"/>
    <property type="match status" value="1"/>
</dbReference>
<dbReference type="NCBIfam" id="TIGR00963">
    <property type="entry name" value="secA"/>
    <property type="match status" value="1"/>
</dbReference>
<dbReference type="PANTHER" id="PTHR30612:SF0">
    <property type="entry name" value="CHLOROPLAST PROTEIN-TRANSPORTING ATPASE"/>
    <property type="match status" value="1"/>
</dbReference>
<dbReference type="PANTHER" id="PTHR30612">
    <property type="entry name" value="SECA INNER MEMBRANE COMPONENT OF SEC PROTEIN SECRETION SYSTEM"/>
    <property type="match status" value="1"/>
</dbReference>
<dbReference type="Pfam" id="PF21090">
    <property type="entry name" value="P-loop_SecA"/>
    <property type="match status" value="1"/>
</dbReference>
<dbReference type="Pfam" id="PF07517">
    <property type="entry name" value="SecA_DEAD"/>
    <property type="match status" value="1"/>
</dbReference>
<dbReference type="Pfam" id="PF01043">
    <property type="entry name" value="SecA_PP_bind"/>
    <property type="match status" value="1"/>
</dbReference>
<dbReference type="Pfam" id="PF07516">
    <property type="entry name" value="SecA_SW"/>
    <property type="match status" value="1"/>
</dbReference>
<dbReference type="PRINTS" id="PR00906">
    <property type="entry name" value="SECA"/>
</dbReference>
<dbReference type="SMART" id="SM00957">
    <property type="entry name" value="SecA_DEAD"/>
    <property type="match status" value="1"/>
</dbReference>
<dbReference type="SMART" id="SM00958">
    <property type="entry name" value="SecA_PP_bind"/>
    <property type="match status" value="1"/>
</dbReference>
<dbReference type="SUPFAM" id="SSF81886">
    <property type="entry name" value="Helical scaffold and wing domains of SecA"/>
    <property type="match status" value="1"/>
</dbReference>
<dbReference type="SUPFAM" id="SSF52540">
    <property type="entry name" value="P-loop containing nucleoside triphosphate hydrolases"/>
    <property type="match status" value="2"/>
</dbReference>
<dbReference type="SUPFAM" id="SSF81767">
    <property type="entry name" value="Pre-protein crosslinking domain of SecA"/>
    <property type="match status" value="1"/>
</dbReference>
<dbReference type="PROSITE" id="PS01312">
    <property type="entry name" value="SECA"/>
    <property type="match status" value="1"/>
</dbReference>
<dbReference type="PROSITE" id="PS51196">
    <property type="entry name" value="SECA_MOTOR_DEAD"/>
    <property type="match status" value="1"/>
</dbReference>
<protein>
    <recommendedName>
        <fullName evidence="1">Protein translocase subunit SecA</fullName>
        <ecNumber evidence="1">7.4.2.8</ecNumber>
    </recommendedName>
</protein>
<gene>
    <name evidence="1" type="primary">secA</name>
    <name type="ordered locus">Dgeo_1058</name>
</gene>
<name>SECA_DEIGD</name>
<proteinExistence type="inferred from homology"/>
<reference key="1">
    <citation type="submission" date="2006-04" db="EMBL/GenBank/DDBJ databases">
        <title>Complete sequence of chromosome of Deinococcus geothermalis DSM 11300.</title>
        <authorList>
            <person name="Copeland A."/>
            <person name="Lucas S."/>
            <person name="Lapidus A."/>
            <person name="Barry K."/>
            <person name="Detter J.C."/>
            <person name="Glavina del Rio T."/>
            <person name="Hammon N."/>
            <person name="Israni S."/>
            <person name="Dalin E."/>
            <person name="Tice H."/>
            <person name="Pitluck S."/>
            <person name="Brettin T."/>
            <person name="Bruce D."/>
            <person name="Han C."/>
            <person name="Tapia R."/>
            <person name="Saunders E."/>
            <person name="Gilna P."/>
            <person name="Schmutz J."/>
            <person name="Larimer F."/>
            <person name="Land M."/>
            <person name="Hauser L."/>
            <person name="Kyrpides N."/>
            <person name="Kim E."/>
            <person name="Daly M.J."/>
            <person name="Fredrickson J.K."/>
            <person name="Makarova K.S."/>
            <person name="Gaidamakova E.K."/>
            <person name="Zhai M."/>
            <person name="Richardson P."/>
        </authorList>
    </citation>
    <scope>NUCLEOTIDE SEQUENCE [LARGE SCALE GENOMIC DNA]</scope>
    <source>
        <strain>DSM 11300 / CIP 105573 / AG-3a</strain>
    </source>
</reference>
<accession>Q1IZH7</accession>
<feature type="chain" id="PRO_0000320791" description="Protein translocase subunit SecA">
    <location>
        <begin position="1"/>
        <end position="869"/>
    </location>
</feature>
<feature type="binding site" evidence="1">
    <location>
        <position position="85"/>
    </location>
    <ligand>
        <name>ATP</name>
        <dbReference type="ChEBI" id="CHEBI:30616"/>
    </ligand>
</feature>
<feature type="binding site" evidence="1">
    <location>
        <begin position="103"/>
        <end position="107"/>
    </location>
    <ligand>
        <name>ATP</name>
        <dbReference type="ChEBI" id="CHEBI:30616"/>
    </ligand>
</feature>
<feature type="binding site" evidence="1">
    <location>
        <position position="508"/>
    </location>
    <ligand>
        <name>ATP</name>
        <dbReference type="ChEBI" id="CHEBI:30616"/>
    </ligand>
</feature>
<organism>
    <name type="scientific">Deinococcus geothermalis (strain DSM 11300 / CIP 105573 / AG-3a)</name>
    <dbReference type="NCBI Taxonomy" id="319795"/>
    <lineage>
        <taxon>Bacteria</taxon>
        <taxon>Thermotogati</taxon>
        <taxon>Deinococcota</taxon>
        <taxon>Deinococci</taxon>
        <taxon>Deinococcales</taxon>
        <taxon>Deinococcaceae</taxon>
        <taxon>Deinococcus</taxon>
    </lineage>
</organism>
<keyword id="KW-0067">ATP-binding</keyword>
<keyword id="KW-1003">Cell membrane</keyword>
<keyword id="KW-0963">Cytoplasm</keyword>
<keyword id="KW-0472">Membrane</keyword>
<keyword id="KW-0547">Nucleotide-binding</keyword>
<keyword id="KW-0653">Protein transport</keyword>
<keyword id="KW-1278">Translocase</keyword>
<keyword id="KW-0811">Translocation</keyword>
<keyword id="KW-0813">Transport</keyword>